<protein>
    <recommendedName>
        <fullName evidence="1">Gamma-glutamyl phosphate reductase</fullName>
        <shortName evidence="1">GPR</shortName>
        <ecNumber evidence="1">1.2.1.41</ecNumber>
    </recommendedName>
    <alternativeName>
        <fullName evidence="1">Glutamate-5-semialdehyde dehydrogenase</fullName>
    </alternativeName>
    <alternativeName>
        <fullName evidence="1">Glutamyl-gamma-semialdehyde dehydrogenase</fullName>
        <shortName evidence="1">GSA dehydrogenase</shortName>
    </alternativeName>
</protein>
<dbReference type="EC" id="1.2.1.41" evidence="1"/>
<dbReference type="EMBL" id="CP000285">
    <property type="protein sequence ID" value="ABE58894.1"/>
    <property type="molecule type" value="Genomic_DNA"/>
</dbReference>
<dbReference type="RefSeq" id="WP_011506840.1">
    <property type="nucleotide sequence ID" value="NC_007963.1"/>
</dbReference>
<dbReference type="SMR" id="Q1QXB4"/>
<dbReference type="STRING" id="290398.Csal_1541"/>
<dbReference type="GeneID" id="95334272"/>
<dbReference type="KEGG" id="csa:Csal_1541"/>
<dbReference type="eggNOG" id="COG0014">
    <property type="taxonomic scope" value="Bacteria"/>
</dbReference>
<dbReference type="HOGENOM" id="CLU_030231_0_0_6"/>
<dbReference type="OrthoDB" id="9809970at2"/>
<dbReference type="UniPathway" id="UPA00098">
    <property type="reaction ID" value="UER00360"/>
</dbReference>
<dbReference type="Proteomes" id="UP000000239">
    <property type="component" value="Chromosome"/>
</dbReference>
<dbReference type="GO" id="GO:0005737">
    <property type="term" value="C:cytoplasm"/>
    <property type="evidence" value="ECO:0007669"/>
    <property type="project" value="UniProtKB-SubCell"/>
</dbReference>
<dbReference type="GO" id="GO:0004350">
    <property type="term" value="F:glutamate-5-semialdehyde dehydrogenase activity"/>
    <property type="evidence" value="ECO:0007669"/>
    <property type="project" value="UniProtKB-UniRule"/>
</dbReference>
<dbReference type="GO" id="GO:0050661">
    <property type="term" value="F:NADP binding"/>
    <property type="evidence" value="ECO:0007669"/>
    <property type="project" value="InterPro"/>
</dbReference>
<dbReference type="GO" id="GO:0055129">
    <property type="term" value="P:L-proline biosynthetic process"/>
    <property type="evidence" value="ECO:0007669"/>
    <property type="project" value="UniProtKB-UniRule"/>
</dbReference>
<dbReference type="CDD" id="cd07079">
    <property type="entry name" value="ALDH_F18-19_ProA-GPR"/>
    <property type="match status" value="1"/>
</dbReference>
<dbReference type="FunFam" id="3.40.309.10:FF:000006">
    <property type="entry name" value="Gamma-glutamyl phosphate reductase"/>
    <property type="match status" value="1"/>
</dbReference>
<dbReference type="Gene3D" id="3.40.605.10">
    <property type="entry name" value="Aldehyde Dehydrogenase, Chain A, domain 1"/>
    <property type="match status" value="1"/>
</dbReference>
<dbReference type="Gene3D" id="3.40.309.10">
    <property type="entry name" value="Aldehyde Dehydrogenase, Chain A, domain 2"/>
    <property type="match status" value="1"/>
</dbReference>
<dbReference type="HAMAP" id="MF_00412">
    <property type="entry name" value="ProA"/>
    <property type="match status" value="1"/>
</dbReference>
<dbReference type="InterPro" id="IPR016161">
    <property type="entry name" value="Ald_DH/histidinol_DH"/>
</dbReference>
<dbReference type="InterPro" id="IPR016163">
    <property type="entry name" value="Ald_DH_C"/>
</dbReference>
<dbReference type="InterPro" id="IPR016162">
    <property type="entry name" value="Ald_DH_N"/>
</dbReference>
<dbReference type="InterPro" id="IPR015590">
    <property type="entry name" value="Aldehyde_DH_dom"/>
</dbReference>
<dbReference type="InterPro" id="IPR020593">
    <property type="entry name" value="G-glutamylP_reductase_CS"/>
</dbReference>
<dbReference type="InterPro" id="IPR012134">
    <property type="entry name" value="Glu-5-SA_DH"/>
</dbReference>
<dbReference type="InterPro" id="IPR000965">
    <property type="entry name" value="GPR_dom"/>
</dbReference>
<dbReference type="NCBIfam" id="NF001221">
    <property type="entry name" value="PRK00197.1"/>
    <property type="match status" value="1"/>
</dbReference>
<dbReference type="NCBIfam" id="TIGR00407">
    <property type="entry name" value="proA"/>
    <property type="match status" value="1"/>
</dbReference>
<dbReference type="PANTHER" id="PTHR11063:SF8">
    <property type="entry name" value="DELTA-1-PYRROLINE-5-CARBOXYLATE SYNTHASE"/>
    <property type="match status" value="1"/>
</dbReference>
<dbReference type="PANTHER" id="PTHR11063">
    <property type="entry name" value="GLUTAMATE SEMIALDEHYDE DEHYDROGENASE"/>
    <property type="match status" value="1"/>
</dbReference>
<dbReference type="Pfam" id="PF00171">
    <property type="entry name" value="Aldedh"/>
    <property type="match status" value="2"/>
</dbReference>
<dbReference type="PIRSF" id="PIRSF000151">
    <property type="entry name" value="GPR"/>
    <property type="match status" value="1"/>
</dbReference>
<dbReference type="SUPFAM" id="SSF53720">
    <property type="entry name" value="ALDH-like"/>
    <property type="match status" value="1"/>
</dbReference>
<dbReference type="PROSITE" id="PS01223">
    <property type="entry name" value="PROA"/>
    <property type="match status" value="1"/>
</dbReference>
<gene>
    <name evidence="1" type="primary">proA</name>
    <name type="ordered locus">Csal_1541</name>
</gene>
<accession>Q1QXB4</accession>
<comment type="function">
    <text evidence="1">Catalyzes the NADPH-dependent reduction of L-glutamate 5-phosphate into L-glutamate 5-semialdehyde and phosphate. The product spontaneously undergoes cyclization to form 1-pyrroline-5-carboxylate.</text>
</comment>
<comment type="catalytic activity">
    <reaction evidence="1">
        <text>L-glutamate 5-semialdehyde + phosphate + NADP(+) = L-glutamyl 5-phosphate + NADPH + H(+)</text>
        <dbReference type="Rhea" id="RHEA:19541"/>
        <dbReference type="ChEBI" id="CHEBI:15378"/>
        <dbReference type="ChEBI" id="CHEBI:43474"/>
        <dbReference type="ChEBI" id="CHEBI:57783"/>
        <dbReference type="ChEBI" id="CHEBI:58066"/>
        <dbReference type="ChEBI" id="CHEBI:58274"/>
        <dbReference type="ChEBI" id="CHEBI:58349"/>
        <dbReference type="EC" id="1.2.1.41"/>
    </reaction>
</comment>
<comment type="pathway">
    <text evidence="1">Amino-acid biosynthesis; L-proline biosynthesis; L-glutamate 5-semialdehyde from L-glutamate: step 2/2.</text>
</comment>
<comment type="subcellular location">
    <subcellularLocation>
        <location evidence="1">Cytoplasm</location>
    </subcellularLocation>
</comment>
<comment type="similarity">
    <text evidence="1">Belongs to the gamma-glutamyl phosphate reductase family.</text>
</comment>
<organism>
    <name type="scientific">Chromohalobacter salexigens (strain ATCC BAA-138 / DSM 3043 / CIP 106854 / NCIMB 13768 / 1H11)</name>
    <dbReference type="NCBI Taxonomy" id="290398"/>
    <lineage>
        <taxon>Bacteria</taxon>
        <taxon>Pseudomonadati</taxon>
        <taxon>Pseudomonadota</taxon>
        <taxon>Gammaproteobacteria</taxon>
        <taxon>Oceanospirillales</taxon>
        <taxon>Halomonadaceae</taxon>
        <taxon>Chromohalobacter</taxon>
    </lineage>
</organism>
<feature type="chain" id="PRO_0000252568" description="Gamma-glutamyl phosphate reductase">
    <location>
        <begin position="1"/>
        <end position="428"/>
    </location>
</feature>
<name>PROA_CHRSD</name>
<sequence>MALETSAPEIADVEAYMRALGERARDASRMLARATTAQKNRALHAMAEALDAARETLETANRRDLEAGRANGLDEALLDRLALTPARIDSMIEGLRQVAALPDPVGEIRDMRYLPSGIQVGKMRVALGVVGIVYESRPNVTVDAASLCLKSGNATILRGGSEAIQSNRAIADCIRQGLAAADLDAACVQVVATTDRAAVGALIAMPEYVDVIVPRGGKGLIERISRDARVPVIKHLDGVCHVYVDRAADDAKAVAIADNAKTQRYSPCNTMETLLVHVDAAPRVLPELARLYASKGVELRACERARAWLADAVAATEDDWHAEYLAPILAVRVVDSLEEAIAHINTYGSHHTDAIVTESVTDARRFLAEVDSSSVMVNASTRFADGFEYGLGAEIGISTDKLHARGPVGLEGLTSEKYIVYGDGHVRS</sequence>
<proteinExistence type="inferred from homology"/>
<keyword id="KW-0028">Amino-acid biosynthesis</keyword>
<keyword id="KW-0963">Cytoplasm</keyword>
<keyword id="KW-0521">NADP</keyword>
<keyword id="KW-0560">Oxidoreductase</keyword>
<keyword id="KW-0641">Proline biosynthesis</keyword>
<keyword id="KW-1185">Reference proteome</keyword>
<reference key="1">
    <citation type="journal article" date="2011" name="Stand. Genomic Sci.">
        <title>Complete genome sequence of the halophilic and highly halotolerant Chromohalobacter salexigens type strain (1H11(T)).</title>
        <authorList>
            <person name="Copeland A."/>
            <person name="O'Connor K."/>
            <person name="Lucas S."/>
            <person name="Lapidus A."/>
            <person name="Berry K.W."/>
            <person name="Detter J.C."/>
            <person name="Del Rio T.G."/>
            <person name="Hammon N."/>
            <person name="Dalin E."/>
            <person name="Tice H."/>
            <person name="Pitluck S."/>
            <person name="Bruce D."/>
            <person name="Goodwin L."/>
            <person name="Han C."/>
            <person name="Tapia R."/>
            <person name="Saunders E."/>
            <person name="Schmutz J."/>
            <person name="Brettin T."/>
            <person name="Larimer F."/>
            <person name="Land M."/>
            <person name="Hauser L."/>
            <person name="Vargas C."/>
            <person name="Nieto J.J."/>
            <person name="Kyrpides N.C."/>
            <person name="Ivanova N."/>
            <person name="Goker M."/>
            <person name="Klenk H.P."/>
            <person name="Csonka L.N."/>
            <person name="Woyke T."/>
        </authorList>
    </citation>
    <scope>NUCLEOTIDE SEQUENCE [LARGE SCALE GENOMIC DNA]</scope>
    <source>
        <strain>ATCC BAA-138 / DSM 3043 / CIP 106854 / NCIMB 13768 / 1H11</strain>
    </source>
</reference>
<evidence type="ECO:0000255" key="1">
    <source>
        <dbReference type="HAMAP-Rule" id="MF_00412"/>
    </source>
</evidence>